<gene>
    <name evidence="1" type="primary">wecG</name>
    <name evidence="1" type="synonym">rffM</name>
    <name type="ordered locus">SPAB_04874</name>
</gene>
<proteinExistence type="inferred from homology"/>
<sequence>MTNNAAAPLYSLRGLPLIGWRDMSHALNYLFADGQLKQGTLVAINAEKLLTAEDNPEVRALIAAAEFKYADGISVVRSIRKKFPQAQVSRVAGADLWEALMARAGKEGTPVFLVGGKPEVLAQTEAKLRTQWNVNIVGSQDGYFTPEQRQALFARIHASGAKIVTVAMGSPKQELLMRDCREVHPHALYMGVGGTYDVFTGHVKRAPKIWQNLGLEWLYRLLSQPRRITRQMRLLRYLRWHYTGDL</sequence>
<protein>
    <recommendedName>
        <fullName evidence="1">UDP-N-acetyl-D-mannosaminuronic acid transferase</fullName>
        <shortName evidence="1">UDP-ManNAcA transferase</shortName>
        <ecNumber evidence="1">2.4.1.180</ecNumber>
    </recommendedName>
</protein>
<organism>
    <name type="scientific">Salmonella paratyphi B (strain ATCC BAA-1250 / SPB7)</name>
    <dbReference type="NCBI Taxonomy" id="1016998"/>
    <lineage>
        <taxon>Bacteria</taxon>
        <taxon>Pseudomonadati</taxon>
        <taxon>Pseudomonadota</taxon>
        <taxon>Gammaproteobacteria</taxon>
        <taxon>Enterobacterales</taxon>
        <taxon>Enterobacteriaceae</taxon>
        <taxon>Salmonella</taxon>
    </lineage>
</organism>
<name>WECG_SALPB</name>
<dbReference type="EC" id="2.4.1.180" evidence="1"/>
<dbReference type="EMBL" id="CP000886">
    <property type="protein sequence ID" value="ABX70178.1"/>
    <property type="molecule type" value="Genomic_DNA"/>
</dbReference>
<dbReference type="RefSeq" id="WP_000183621.1">
    <property type="nucleotide sequence ID" value="NC_010102.1"/>
</dbReference>
<dbReference type="SMR" id="A9MXG7"/>
<dbReference type="CAZy" id="GT26">
    <property type="family name" value="Glycosyltransferase Family 26"/>
</dbReference>
<dbReference type="KEGG" id="spq:SPAB_04874"/>
<dbReference type="PATRIC" id="fig|1016998.12.peg.4582"/>
<dbReference type="HOGENOM" id="CLU_063203_3_2_6"/>
<dbReference type="BioCyc" id="SENT1016998:SPAB_RS19825-MONOMER"/>
<dbReference type="UniPathway" id="UPA00566"/>
<dbReference type="Proteomes" id="UP000008556">
    <property type="component" value="Chromosome"/>
</dbReference>
<dbReference type="GO" id="GO:0047241">
    <property type="term" value="F:lipopolysaccharide N-acetylmannosaminouronosyltransferase activity"/>
    <property type="evidence" value="ECO:0007669"/>
    <property type="project" value="UniProtKB-UniRule"/>
</dbReference>
<dbReference type="GO" id="GO:0009246">
    <property type="term" value="P:enterobacterial common antigen biosynthetic process"/>
    <property type="evidence" value="ECO:0007669"/>
    <property type="project" value="UniProtKB-UniRule"/>
</dbReference>
<dbReference type="CDD" id="cd06533">
    <property type="entry name" value="Glyco_transf_WecG_TagA"/>
    <property type="match status" value="1"/>
</dbReference>
<dbReference type="HAMAP" id="MF_01001">
    <property type="entry name" value="WecG_RffM"/>
    <property type="match status" value="1"/>
</dbReference>
<dbReference type="InterPro" id="IPR023085">
    <property type="entry name" value="UDP-ManNAcA_Trfase_WecG"/>
</dbReference>
<dbReference type="InterPro" id="IPR004629">
    <property type="entry name" value="WecG_TagA_CpsF"/>
</dbReference>
<dbReference type="NCBIfam" id="NF002980">
    <property type="entry name" value="PRK03692.1"/>
    <property type="match status" value="1"/>
</dbReference>
<dbReference type="NCBIfam" id="TIGR00696">
    <property type="entry name" value="wecG_tagA_cpsF"/>
    <property type="match status" value="1"/>
</dbReference>
<dbReference type="PANTHER" id="PTHR34136">
    <property type="match status" value="1"/>
</dbReference>
<dbReference type="PANTHER" id="PTHR34136:SF1">
    <property type="entry name" value="UDP-N-ACETYL-D-MANNOSAMINURONIC ACID TRANSFERASE"/>
    <property type="match status" value="1"/>
</dbReference>
<dbReference type="Pfam" id="PF03808">
    <property type="entry name" value="Glyco_tran_WecG"/>
    <property type="match status" value="1"/>
</dbReference>
<feature type="chain" id="PRO_1000083948" description="UDP-N-acetyl-D-mannosaminuronic acid transferase">
    <location>
        <begin position="1"/>
        <end position="246"/>
    </location>
</feature>
<keyword id="KW-0328">Glycosyltransferase</keyword>
<keyword id="KW-0808">Transferase</keyword>
<reference key="1">
    <citation type="submission" date="2007-11" db="EMBL/GenBank/DDBJ databases">
        <authorList>
            <consortium name="The Salmonella enterica serovar Paratyphi B Genome Sequencing Project"/>
            <person name="McClelland M."/>
            <person name="Sanderson E.K."/>
            <person name="Porwollik S."/>
            <person name="Spieth J."/>
            <person name="Clifton W.S."/>
            <person name="Fulton R."/>
            <person name="Cordes M."/>
            <person name="Wollam A."/>
            <person name="Shah N."/>
            <person name="Pepin K."/>
            <person name="Bhonagiri V."/>
            <person name="Nash W."/>
            <person name="Johnson M."/>
            <person name="Thiruvilangam P."/>
            <person name="Wilson R."/>
        </authorList>
    </citation>
    <scope>NUCLEOTIDE SEQUENCE [LARGE SCALE GENOMIC DNA]</scope>
    <source>
        <strain>ATCC BAA-1250 / SPB7</strain>
    </source>
</reference>
<evidence type="ECO:0000255" key="1">
    <source>
        <dbReference type="HAMAP-Rule" id="MF_01001"/>
    </source>
</evidence>
<accession>A9MXG7</accession>
<comment type="function">
    <text evidence="1">Catalyzes the synthesis of Und-PP-GlcNAc-ManNAcA (Lipid II), the second lipid-linked intermediate involved in enterobacterial common antigen (ECA) synthesis.</text>
</comment>
<comment type="catalytic activity">
    <reaction evidence="1">
        <text>UDP-N-acetyl-alpha-D-mannosaminouronate + N-acetyl-alpha-D-glucosaminyl-di-trans,octa-cis-undecaprenyl diphosphate = beta-D-ManNAcA-(1-&gt;4)-alpha-D-GlcNAc-di-trans,octa-cis-undecaprenyl diphosphate + UDP + H(+)</text>
        <dbReference type="Rhea" id="RHEA:28366"/>
        <dbReference type="ChEBI" id="CHEBI:15378"/>
        <dbReference type="ChEBI" id="CHEBI:58223"/>
        <dbReference type="ChEBI" id="CHEBI:61495"/>
        <dbReference type="ChEBI" id="CHEBI:62959"/>
        <dbReference type="ChEBI" id="CHEBI:70731"/>
        <dbReference type="EC" id="2.4.1.180"/>
    </reaction>
</comment>
<comment type="pathway">
    <text evidence="1">Bacterial outer membrane biogenesis; enterobacterial common antigen biosynthesis.</text>
</comment>
<comment type="similarity">
    <text evidence="1">Belongs to the glycosyltransferase 26 family.</text>
</comment>